<keyword id="KW-0025">Alternative splicing</keyword>
<keyword id="KW-1003">Cell membrane</keyword>
<keyword id="KW-0472">Membrane</keyword>
<keyword id="KW-0597">Phosphoprotein</keyword>
<keyword id="KW-1267">Proteomics identification</keyword>
<keyword id="KW-1185">Reference proteome</keyword>
<feature type="chain" id="PRO_0000320652" description="TBC1 domain family member 30">
    <location>
        <begin position="1"/>
        <end position="924"/>
    </location>
</feature>
<feature type="domain" description="Rab-GAP TBC" evidence="2">
    <location>
        <begin position="249"/>
        <end position="457"/>
    </location>
</feature>
<feature type="region of interest" description="Disordered" evidence="3">
    <location>
        <begin position="1"/>
        <end position="76"/>
    </location>
</feature>
<feature type="region of interest" description="Disordered" evidence="3">
    <location>
        <begin position="94"/>
        <end position="134"/>
    </location>
</feature>
<feature type="region of interest" description="Disordered" evidence="3">
    <location>
        <begin position="541"/>
        <end position="564"/>
    </location>
</feature>
<feature type="region of interest" description="Disordered" evidence="3">
    <location>
        <begin position="776"/>
        <end position="806"/>
    </location>
</feature>
<feature type="region of interest" description="Disordered" evidence="3">
    <location>
        <begin position="838"/>
        <end position="924"/>
    </location>
</feature>
<feature type="compositionally biased region" description="Gly residues" evidence="3">
    <location>
        <begin position="1"/>
        <end position="11"/>
    </location>
</feature>
<feature type="compositionally biased region" description="Basic and acidic residues" evidence="3">
    <location>
        <begin position="47"/>
        <end position="59"/>
    </location>
</feature>
<feature type="compositionally biased region" description="Acidic residues" evidence="3">
    <location>
        <begin position="555"/>
        <end position="564"/>
    </location>
</feature>
<feature type="compositionally biased region" description="Polar residues" evidence="3">
    <location>
        <begin position="858"/>
        <end position="870"/>
    </location>
</feature>
<feature type="compositionally biased region" description="Gly residues" evidence="3">
    <location>
        <begin position="914"/>
        <end position="924"/>
    </location>
</feature>
<feature type="modified residue" description="Phosphoserine" evidence="1">
    <location>
        <position position="800"/>
    </location>
</feature>
<feature type="splice variant" id="VSP_062258" description="In isoform 4.">
    <location>
        <begin position="1"/>
        <end position="277"/>
    </location>
</feature>
<feature type="splice variant" id="VSP_042427" description="In isoform 2 and isoform 3." evidence="5 6">
    <original>MDVLPTGGGRPGLRTELEFRGGGGEARLESQEEETIPAAPPAPRLRGAAERPRRSRDTWDGDEDTEPGEACGGRTSRTASLVSGLLNELYSCTEEEEAAGGGRGAEGRRRRRDSLDSSTEASGSDVVLGGRSGAGDSRVLQELQERPSQRHQMLYLRQKDANELKTILRELKYRIGIQSAKLLRHLKQKDRLLHKVQRNCDIVTACLQAVSQKRR</original>
    <variation>MRQDKLTGSLRRGGRCLKRQGGGVGTILSNVLKKRSCISRTAPRLLCTLEPG</variation>
    <location>
        <begin position="1"/>
        <end position="215"/>
    </location>
</feature>
<feature type="splice variant" id="VSP_042428" description="In isoform 3." evidence="5">
    <original>TRRTIEGQSPEPVFGDADVDVSAVQAKLGALELNQRDAAAETELRVHPPCQRHCPEPPSAPEENKATSKAPQGSNSKTPIFSPFPSVKPLRKSATARNLGLYGPTERTPTVHFPQMSRSFSKPGGGNSGTKKR</original>
    <variation>SSYKSLQMI</variation>
    <location>
        <begin position="792"/>
        <end position="924"/>
    </location>
</feature>
<feature type="sequence variant" id="VAR_039261" description="In dbSNP:rs11615287.">
    <original>Q</original>
    <variation>H</variation>
    <location>
        <position position="296"/>
    </location>
</feature>
<feature type="sequence variant" id="VAR_052544" description="In dbSNP:rs2290527.">
    <original>N</original>
    <variation>D</variation>
    <location>
        <position position="596"/>
    </location>
</feature>
<feature type="sequence variant" id="VAR_039262" description="In dbSNP:rs939875." evidence="4">
    <original>V</original>
    <variation>I</variation>
    <location>
        <position position="752"/>
    </location>
</feature>
<feature type="sequence variant" id="VAR_059857" description="In dbSNP:rs2290527.">
    <original>N</original>
    <variation>D</variation>
    <location>
        <position position="759"/>
    </location>
</feature>
<feature type="sequence conflict" description="In Ref. 3; BAG51513." evidence="7" ref="3">
    <original>A</original>
    <variation>S</variation>
    <location>
        <position position="770"/>
    </location>
</feature>
<gene>
    <name type="primary">TBC1D30</name>
    <name type="synonym">KIAA0984</name>
</gene>
<dbReference type="EMBL" id="AB449914">
    <property type="protein sequence ID" value="BAH16657.1"/>
    <property type="molecule type" value="mRNA"/>
</dbReference>
<dbReference type="EMBL" id="AB023201">
    <property type="protein sequence ID" value="BAA76828.1"/>
    <property type="status" value="ALT_INIT"/>
    <property type="molecule type" value="mRNA"/>
</dbReference>
<dbReference type="EMBL" id="AK055404">
    <property type="protein sequence ID" value="BAG51513.1"/>
    <property type="molecule type" value="mRNA"/>
</dbReference>
<dbReference type="EMBL" id="AC025262">
    <property type="status" value="NOT_ANNOTATED_CDS"/>
    <property type="molecule type" value="Genomic_DNA"/>
</dbReference>
<dbReference type="EMBL" id="AC078815">
    <property type="status" value="NOT_ANNOTATED_CDS"/>
    <property type="molecule type" value="Genomic_DNA"/>
</dbReference>
<dbReference type="CCDS" id="CCDS53813.1">
    <molecule id="Q9Y2I9-2"/>
</dbReference>
<dbReference type="CCDS" id="CCDS81708.1">
    <molecule id="Q9Y2I9-4"/>
</dbReference>
<dbReference type="RefSeq" id="NP_001317115.1">
    <property type="nucleotide sequence ID" value="NM_001330186.1"/>
</dbReference>
<dbReference type="RefSeq" id="NP_001317116.1">
    <molecule id="Q9Y2I9-4"/>
    <property type="nucleotide sequence ID" value="NM_001330187.2"/>
</dbReference>
<dbReference type="RefSeq" id="NP_001317117.1">
    <molecule id="Q9Y2I9-4"/>
    <property type="nucleotide sequence ID" value="NM_001330188.2"/>
</dbReference>
<dbReference type="RefSeq" id="NP_001351767.1">
    <molecule id="Q9Y2I9-4"/>
    <property type="nucleotide sequence ID" value="NM_001364838.2"/>
</dbReference>
<dbReference type="RefSeq" id="NP_056094.1">
    <molecule id="Q9Y2I9-2"/>
    <property type="nucleotide sequence ID" value="NM_015279.2"/>
</dbReference>
<dbReference type="RefSeq" id="XP_047284552.1">
    <molecule id="Q9Y2I9-1"/>
    <property type="nucleotide sequence ID" value="XM_047428596.1"/>
</dbReference>
<dbReference type="RefSeq" id="XP_047284555.1">
    <molecule id="Q9Y2I9-4"/>
    <property type="nucleotide sequence ID" value="XM_047428599.1"/>
</dbReference>
<dbReference type="RefSeq" id="XP_054227536.1">
    <molecule id="Q9Y2I9-1"/>
    <property type="nucleotide sequence ID" value="XM_054371561.1"/>
</dbReference>
<dbReference type="RefSeq" id="XP_054227541.1">
    <molecule id="Q9Y2I9-4"/>
    <property type="nucleotide sequence ID" value="XM_054371566.1"/>
</dbReference>
<dbReference type="SMR" id="Q9Y2I9"/>
<dbReference type="BioGRID" id="116917">
    <property type="interactions" value="26"/>
</dbReference>
<dbReference type="FunCoup" id="Q9Y2I9">
    <property type="interactions" value="344"/>
</dbReference>
<dbReference type="IntAct" id="Q9Y2I9">
    <property type="interactions" value="13"/>
</dbReference>
<dbReference type="STRING" id="9606.ENSP00000440207"/>
<dbReference type="iPTMnet" id="Q9Y2I9"/>
<dbReference type="PhosphoSitePlus" id="Q9Y2I9"/>
<dbReference type="BioMuta" id="TBC1D30"/>
<dbReference type="DMDM" id="172046608"/>
<dbReference type="jPOST" id="Q9Y2I9"/>
<dbReference type="MassIVE" id="Q9Y2I9"/>
<dbReference type="PaxDb" id="9606-ENSP00000440207"/>
<dbReference type="PeptideAtlas" id="Q9Y2I9"/>
<dbReference type="ProteomicsDB" id="85806">
    <molecule id="Q9Y2I9-1"/>
</dbReference>
<dbReference type="ProteomicsDB" id="85807">
    <molecule id="Q9Y2I9-2"/>
</dbReference>
<dbReference type="ProteomicsDB" id="85808">
    <molecule id="Q9Y2I9-3"/>
</dbReference>
<dbReference type="Antibodypedia" id="51838">
    <property type="antibodies" value="15 antibodies from 7 providers"/>
</dbReference>
<dbReference type="DNASU" id="23329"/>
<dbReference type="Ensembl" id="ENST00000539867.6">
    <molecule id="Q9Y2I9-2"/>
    <property type="protein sequence ID" value="ENSP00000440207.1"/>
    <property type="gene ID" value="ENSG00000111490.15"/>
</dbReference>
<dbReference type="Ensembl" id="ENST00000542120.6">
    <molecule id="Q9Y2I9-1"/>
    <property type="protein sequence ID" value="ENSP00000440640.2"/>
    <property type="gene ID" value="ENSG00000111490.15"/>
</dbReference>
<dbReference type="Ensembl" id="ENST00000674237.1">
    <molecule id="Q9Y2I9-4"/>
    <property type="protein sequence ID" value="ENSP00000501371.1"/>
    <property type="gene ID" value="ENSG00000111490.15"/>
</dbReference>
<dbReference type="GeneID" id="23329"/>
<dbReference type="KEGG" id="hsa:23329"/>
<dbReference type="MANE-Select" id="ENST00000539867.6">
    <molecule id="Q9Y2I9-2"/>
    <property type="protein sequence ID" value="ENSP00000440207.1"/>
    <property type="RefSeq nucleotide sequence ID" value="NM_015279.2"/>
    <property type="RefSeq protein sequence ID" value="NP_056094.1"/>
</dbReference>
<dbReference type="UCSC" id="uc010sst.3">
    <molecule id="Q9Y2I9-1"/>
    <property type="organism name" value="human"/>
</dbReference>
<dbReference type="AGR" id="HGNC:29164"/>
<dbReference type="CTD" id="23329"/>
<dbReference type="DisGeNET" id="23329"/>
<dbReference type="GeneCards" id="TBC1D30"/>
<dbReference type="HGNC" id="HGNC:29164">
    <property type="gene designation" value="TBC1D30"/>
</dbReference>
<dbReference type="HPA" id="ENSG00000111490">
    <property type="expression patterns" value="Tissue enhanced (pancreas)"/>
</dbReference>
<dbReference type="MalaCards" id="TBC1D30"/>
<dbReference type="MIM" id="615077">
    <property type="type" value="gene"/>
</dbReference>
<dbReference type="neXtProt" id="NX_Q9Y2I9"/>
<dbReference type="OpenTargets" id="ENSG00000111490"/>
<dbReference type="PharmGKB" id="PA162405327"/>
<dbReference type="VEuPathDB" id="HostDB:ENSG00000111490"/>
<dbReference type="eggNOG" id="KOG2058">
    <property type="taxonomic scope" value="Eukaryota"/>
</dbReference>
<dbReference type="GeneTree" id="ENSGT00940000159226"/>
<dbReference type="InParanoid" id="Q9Y2I9"/>
<dbReference type="OMA" id="CKTNNLG"/>
<dbReference type="OrthoDB" id="289721at2759"/>
<dbReference type="PAN-GO" id="Q9Y2I9">
    <property type="GO annotations" value="2 GO annotations based on evolutionary models"/>
</dbReference>
<dbReference type="PhylomeDB" id="Q9Y2I9"/>
<dbReference type="TreeFam" id="TF321898"/>
<dbReference type="PathwayCommons" id="Q9Y2I9"/>
<dbReference type="SignaLink" id="Q9Y2I9"/>
<dbReference type="BioGRID-ORCS" id="23329">
    <property type="hits" value="15 hits in 1147 CRISPR screens"/>
</dbReference>
<dbReference type="ChiTaRS" id="TBC1D30">
    <property type="organism name" value="human"/>
</dbReference>
<dbReference type="GenomeRNAi" id="23329"/>
<dbReference type="Pharos" id="Q9Y2I9">
    <property type="development level" value="Tbio"/>
</dbReference>
<dbReference type="PRO" id="PR:Q9Y2I9"/>
<dbReference type="Proteomes" id="UP000005640">
    <property type="component" value="Chromosome 12"/>
</dbReference>
<dbReference type="RNAct" id="Q9Y2I9">
    <property type="molecule type" value="protein"/>
</dbReference>
<dbReference type="Bgee" id="ENSG00000111490">
    <property type="expression patterns" value="Expressed in endothelial cell and 161 other cell types or tissues"/>
</dbReference>
<dbReference type="ExpressionAtlas" id="Q9Y2I9">
    <property type="expression patterns" value="baseline and differential"/>
</dbReference>
<dbReference type="GO" id="GO:0036064">
    <property type="term" value="C:ciliary basal body"/>
    <property type="evidence" value="ECO:0000314"/>
    <property type="project" value="UniProtKB"/>
</dbReference>
<dbReference type="GO" id="GO:0005929">
    <property type="term" value="C:cilium"/>
    <property type="evidence" value="ECO:0000314"/>
    <property type="project" value="UniProtKB"/>
</dbReference>
<dbReference type="GO" id="GO:0005829">
    <property type="term" value="C:cytosol"/>
    <property type="evidence" value="ECO:0000314"/>
    <property type="project" value="HPA"/>
</dbReference>
<dbReference type="GO" id="GO:0016604">
    <property type="term" value="C:nuclear body"/>
    <property type="evidence" value="ECO:0000314"/>
    <property type="project" value="HPA"/>
</dbReference>
<dbReference type="GO" id="GO:0005886">
    <property type="term" value="C:plasma membrane"/>
    <property type="evidence" value="ECO:0000314"/>
    <property type="project" value="HPA"/>
</dbReference>
<dbReference type="GO" id="GO:0005096">
    <property type="term" value="F:GTPase activator activity"/>
    <property type="evidence" value="ECO:0000314"/>
    <property type="project" value="UniProtKB"/>
</dbReference>
<dbReference type="GO" id="GO:0031267">
    <property type="term" value="F:small GTPase binding"/>
    <property type="evidence" value="ECO:0000353"/>
    <property type="project" value="UniProtKB"/>
</dbReference>
<dbReference type="GO" id="GO:1902018">
    <property type="term" value="P:negative regulation of cilium assembly"/>
    <property type="evidence" value="ECO:0000315"/>
    <property type="project" value="UniProtKB"/>
</dbReference>
<dbReference type="GO" id="GO:0043547">
    <property type="term" value="P:positive regulation of GTPase activity"/>
    <property type="evidence" value="ECO:0000314"/>
    <property type="project" value="UniProtKB"/>
</dbReference>
<dbReference type="FunFam" id="1.10.472.80:FF:000011">
    <property type="entry name" value="TBC1 domain family member 30"/>
    <property type="match status" value="1"/>
</dbReference>
<dbReference type="FunFam" id="1.10.8.270:FF:000009">
    <property type="entry name" value="TBC1 domain family member 30"/>
    <property type="match status" value="1"/>
</dbReference>
<dbReference type="Gene3D" id="1.10.8.270">
    <property type="entry name" value="putative rabgap domain of human tbc1 domain family member 14 like domains"/>
    <property type="match status" value="1"/>
</dbReference>
<dbReference type="Gene3D" id="1.10.472.80">
    <property type="entry name" value="Ypt/Rab-GAP domain of gyp1p, domain 3"/>
    <property type="match status" value="1"/>
</dbReference>
<dbReference type="InterPro" id="IPR000195">
    <property type="entry name" value="Rab-GAP-TBC_dom"/>
</dbReference>
<dbReference type="InterPro" id="IPR035969">
    <property type="entry name" value="Rab-GAP_TBC_sf"/>
</dbReference>
<dbReference type="InterPro" id="IPR032738">
    <property type="entry name" value="Tbc1d30_C"/>
</dbReference>
<dbReference type="PANTHER" id="PTHR13399:SF4">
    <property type="entry name" value="TBC1 DOMAIN FAMILY MEMBER 30"/>
    <property type="match status" value="1"/>
</dbReference>
<dbReference type="PANTHER" id="PTHR13399">
    <property type="entry name" value="TRANSLOCON-ASSOCIATED PROTEIN TRAP , GAMMA SUBUNIT"/>
    <property type="match status" value="1"/>
</dbReference>
<dbReference type="Pfam" id="PF15733">
    <property type="entry name" value="DUF4682"/>
    <property type="match status" value="1"/>
</dbReference>
<dbReference type="Pfam" id="PF00566">
    <property type="entry name" value="RabGAP-TBC"/>
    <property type="match status" value="1"/>
</dbReference>
<dbReference type="SMART" id="SM00164">
    <property type="entry name" value="TBC"/>
    <property type="match status" value="1"/>
</dbReference>
<dbReference type="SUPFAM" id="SSF47923">
    <property type="entry name" value="Ypt/Rab-GAP domain of gyp1p"/>
    <property type="match status" value="2"/>
</dbReference>
<dbReference type="PROSITE" id="PS50086">
    <property type="entry name" value="TBC_RABGAP"/>
    <property type="match status" value="1"/>
</dbReference>
<organism>
    <name type="scientific">Homo sapiens</name>
    <name type="common">Human</name>
    <dbReference type="NCBI Taxonomy" id="9606"/>
    <lineage>
        <taxon>Eukaryota</taxon>
        <taxon>Metazoa</taxon>
        <taxon>Chordata</taxon>
        <taxon>Craniata</taxon>
        <taxon>Vertebrata</taxon>
        <taxon>Euteleostomi</taxon>
        <taxon>Mammalia</taxon>
        <taxon>Eutheria</taxon>
        <taxon>Euarchontoglires</taxon>
        <taxon>Primates</taxon>
        <taxon>Haplorrhini</taxon>
        <taxon>Catarrhini</taxon>
        <taxon>Hominidae</taxon>
        <taxon>Homo</taxon>
    </lineage>
</organism>
<proteinExistence type="evidence at protein level"/>
<evidence type="ECO:0000250" key="1">
    <source>
        <dbReference type="UniProtKB" id="Q69ZT9"/>
    </source>
</evidence>
<evidence type="ECO:0000255" key="2">
    <source>
        <dbReference type="PROSITE-ProRule" id="PRU00163"/>
    </source>
</evidence>
<evidence type="ECO:0000256" key="3">
    <source>
        <dbReference type="SAM" id="MobiDB-lite"/>
    </source>
</evidence>
<evidence type="ECO:0000269" key="4">
    <source>
    </source>
</evidence>
<evidence type="ECO:0000303" key="5">
    <source>
    </source>
</evidence>
<evidence type="ECO:0000303" key="6">
    <source>
    </source>
</evidence>
<evidence type="ECO:0000305" key="7"/>
<accession>Q9Y2I9</accession>
<accession>B3KP01</accession>
<accession>B9A6M9</accession>
<accession>E7EMW4</accession>
<accession>F5GYJ9</accession>
<comment type="function">
    <text evidence="7">May act as a GTPase-activating protein for Rab family protein(s).</text>
</comment>
<comment type="interaction">
    <interactant intactId="EBI-17455779">
        <id>Q9Y2I9-2</id>
    </interactant>
    <interactant intactId="EBI-739624">
        <id>Q8NHQ1</id>
        <label>CEP70</label>
    </interactant>
    <organismsDiffer>false</organismsDiffer>
    <experiments>3</experiments>
</comment>
<comment type="interaction">
    <interactant intactId="EBI-17455779">
        <id>Q9Y2I9-2</id>
    </interactant>
    <interactant intactId="EBI-618309">
        <id>Q08379</id>
        <label>GOLGA2</label>
    </interactant>
    <organismsDiffer>false</organismsDiffer>
    <experiments>3</experiments>
</comment>
<comment type="interaction">
    <interactant intactId="EBI-17455779">
        <id>Q9Y2I9-2</id>
    </interactant>
    <interactant intactId="EBI-5916454">
        <id>A6NEM1</id>
        <label>GOLGA6L9</label>
    </interactant>
    <organismsDiffer>false</organismsDiffer>
    <experiments>3</experiments>
</comment>
<comment type="interaction">
    <interactant intactId="EBI-17455779">
        <id>Q9Y2I9-2</id>
    </interactant>
    <interactant intactId="EBI-717919">
        <id>Q4V328</id>
        <label>GRIPAP1</label>
    </interactant>
    <organismsDiffer>false</organismsDiffer>
    <experiments>3</experiments>
</comment>
<comment type="interaction">
    <interactant intactId="EBI-17455779">
        <id>Q9Y2I9-2</id>
    </interactant>
    <interactant intactId="EBI-10961706">
        <id>Q96ED9-2</id>
        <label>HOOK2</label>
    </interactant>
    <organismsDiffer>false</organismsDiffer>
    <experiments>3</experiments>
</comment>
<comment type="interaction">
    <interactant intactId="EBI-17455779">
        <id>Q9Y2I9-2</id>
    </interactant>
    <interactant intactId="EBI-7116203">
        <id>O75031</id>
        <label>HSF2BP</label>
    </interactant>
    <organismsDiffer>false</organismsDiffer>
    <experiments>3</experiments>
</comment>
<comment type="interaction">
    <interactant intactId="EBI-17455779">
        <id>Q9Y2I9-2</id>
    </interactant>
    <interactant intactId="EBI-1058674">
        <id>Q92764</id>
        <label>KRT35</label>
    </interactant>
    <organismsDiffer>false</organismsDiffer>
    <experiments>3</experiments>
</comment>
<comment type="interaction">
    <interactant intactId="EBI-17455779">
        <id>Q9Y2I9-2</id>
    </interactant>
    <interactant intactId="EBI-1105213">
        <id>Q9UBB9</id>
        <label>TFIP11</label>
    </interactant>
    <organismsDiffer>false</organismsDiffer>
    <experiments>3</experiments>
</comment>
<comment type="interaction">
    <interactant intactId="EBI-17455779">
        <id>Q9Y2I9-2</id>
    </interactant>
    <interactant intactId="EBI-527853">
        <id>Q9UGI0</id>
        <label>ZRANB1</label>
    </interactant>
    <organismsDiffer>false</organismsDiffer>
    <experiments>3</experiments>
</comment>
<comment type="subcellular location">
    <subcellularLocation>
        <location evidence="4">Cell membrane</location>
        <topology evidence="4">Peripheral membrane protein</topology>
    </subcellularLocation>
</comment>
<comment type="alternative products">
    <event type="alternative splicing"/>
    <isoform>
        <id>Q9Y2I9-1</id>
        <name>1</name>
        <sequence type="displayed"/>
    </isoform>
    <isoform>
        <id>Q9Y2I9-2</id>
        <name>2</name>
        <sequence type="described" ref="VSP_042427"/>
    </isoform>
    <isoform>
        <id>Q9Y2I9-3</id>
        <name>3</name>
        <sequence type="described" ref="VSP_042427 VSP_042428"/>
    </isoform>
    <isoform>
        <id>Q9Y2I9-4</id>
        <name>4</name>
        <sequence type="described" ref="VSP_062258"/>
    </isoform>
</comment>
<comment type="sequence caution" evidence="7">
    <conflict type="erroneous initiation">
        <sequence resource="EMBL-CDS" id="BAA76828"/>
    </conflict>
    <text>Extended N-terminus.</text>
</comment>
<protein>
    <recommendedName>
        <fullName>TBC1 domain family member 30</fullName>
    </recommendedName>
</protein>
<name>TBC30_HUMAN</name>
<reference key="1">
    <citation type="journal article" date="2009" name="Genes Cells">
        <title>Identification and characterization of a novel Tre-2/Bub2/Cdc16 (TBC) protein that possesses Rab3A-GAP activity.</title>
        <authorList>
            <person name="Ishibashi K."/>
            <person name="Kanno E."/>
            <person name="Itoh T."/>
            <person name="Fukuda M."/>
        </authorList>
    </citation>
    <scope>NUCLEOTIDE SEQUENCE [MRNA] (ISOFORM 2)</scope>
    <scope>VARIANT ILE-752</scope>
    <source>
        <tissue>Brain</tissue>
    </source>
</reference>
<reference key="2">
    <citation type="journal article" date="1999" name="DNA Res.">
        <title>Prediction of the coding sequences of unidentified human genes. XIII. The complete sequences of 100 new cDNA clones from brain which code for large proteins in vitro.</title>
        <authorList>
            <person name="Nagase T."/>
            <person name="Ishikawa K."/>
            <person name="Suyama M."/>
            <person name="Kikuno R."/>
            <person name="Hirosawa M."/>
            <person name="Miyajima N."/>
            <person name="Tanaka A."/>
            <person name="Kotani H."/>
            <person name="Nomura N."/>
            <person name="Ohara O."/>
        </authorList>
    </citation>
    <scope>NUCLEOTIDE SEQUENCE [LARGE SCALE MRNA] (ISOFORM 4)</scope>
    <source>
        <tissue>Brain</tissue>
    </source>
</reference>
<reference key="3">
    <citation type="journal article" date="2004" name="Nat. Genet.">
        <title>Complete sequencing and characterization of 21,243 full-length human cDNAs.</title>
        <authorList>
            <person name="Ota T."/>
            <person name="Suzuki Y."/>
            <person name="Nishikawa T."/>
            <person name="Otsuki T."/>
            <person name="Sugiyama T."/>
            <person name="Irie R."/>
            <person name="Wakamatsu A."/>
            <person name="Hayashi K."/>
            <person name="Sato H."/>
            <person name="Nagai K."/>
            <person name="Kimura K."/>
            <person name="Makita H."/>
            <person name="Sekine M."/>
            <person name="Obayashi M."/>
            <person name="Nishi T."/>
            <person name="Shibahara T."/>
            <person name="Tanaka T."/>
            <person name="Ishii S."/>
            <person name="Yamamoto J."/>
            <person name="Saito K."/>
            <person name="Kawai Y."/>
            <person name="Isono Y."/>
            <person name="Nakamura Y."/>
            <person name="Nagahari K."/>
            <person name="Murakami K."/>
            <person name="Yasuda T."/>
            <person name="Iwayanagi T."/>
            <person name="Wagatsuma M."/>
            <person name="Shiratori A."/>
            <person name="Sudo H."/>
            <person name="Hosoiri T."/>
            <person name="Kaku Y."/>
            <person name="Kodaira H."/>
            <person name="Kondo H."/>
            <person name="Sugawara M."/>
            <person name="Takahashi M."/>
            <person name="Kanda K."/>
            <person name="Yokoi T."/>
            <person name="Furuya T."/>
            <person name="Kikkawa E."/>
            <person name="Omura Y."/>
            <person name="Abe K."/>
            <person name="Kamihara K."/>
            <person name="Katsuta N."/>
            <person name="Sato K."/>
            <person name="Tanikawa M."/>
            <person name="Yamazaki M."/>
            <person name="Ninomiya K."/>
            <person name="Ishibashi T."/>
            <person name="Yamashita H."/>
            <person name="Murakawa K."/>
            <person name="Fujimori K."/>
            <person name="Tanai H."/>
            <person name="Kimata M."/>
            <person name="Watanabe M."/>
            <person name="Hiraoka S."/>
            <person name="Chiba Y."/>
            <person name="Ishida S."/>
            <person name="Ono Y."/>
            <person name="Takiguchi S."/>
            <person name="Watanabe S."/>
            <person name="Yosida M."/>
            <person name="Hotuta T."/>
            <person name="Kusano J."/>
            <person name="Kanehori K."/>
            <person name="Takahashi-Fujii A."/>
            <person name="Hara H."/>
            <person name="Tanase T.-O."/>
            <person name="Nomura Y."/>
            <person name="Togiya S."/>
            <person name="Komai F."/>
            <person name="Hara R."/>
            <person name="Takeuchi K."/>
            <person name="Arita M."/>
            <person name="Imose N."/>
            <person name="Musashino K."/>
            <person name="Yuuki H."/>
            <person name="Oshima A."/>
            <person name="Sasaki N."/>
            <person name="Aotsuka S."/>
            <person name="Yoshikawa Y."/>
            <person name="Matsunawa H."/>
            <person name="Ichihara T."/>
            <person name="Shiohata N."/>
            <person name="Sano S."/>
            <person name="Moriya S."/>
            <person name="Momiyama H."/>
            <person name="Satoh N."/>
            <person name="Takami S."/>
            <person name="Terashima Y."/>
            <person name="Suzuki O."/>
            <person name="Nakagawa S."/>
            <person name="Senoh A."/>
            <person name="Mizoguchi H."/>
            <person name="Goto Y."/>
            <person name="Shimizu F."/>
            <person name="Wakebe H."/>
            <person name="Hishigaki H."/>
            <person name="Watanabe T."/>
            <person name="Sugiyama A."/>
            <person name="Takemoto M."/>
            <person name="Kawakami B."/>
            <person name="Yamazaki M."/>
            <person name="Watanabe K."/>
            <person name="Kumagai A."/>
            <person name="Itakura S."/>
            <person name="Fukuzumi Y."/>
            <person name="Fujimori Y."/>
            <person name="Komiyama M."/>
            <person name="Tashiro H."/>
            <person name="Tanigami A."/>
            <person name="Fujiwara T."/>
            <person name="Ono T."/>
            <person name="Yamada K."/>
            <person name="Fujii Y."/>
            <person name="Ozaki K."/>
            <person name="Hirao M."/>
            <person name="Ohmori Y."/>
            <person name="Kawabata A."/>
            <person name="Hikiji T."/>
            <person name="Kobatake N."/>
            <person name="Inagaki H."/>
            <person name="Ikema Y."/>
            <person name="Okamoto S."/>
            <person name="Okitani R."/>
            <person name="Kawakami T."/>
            <person name="Noguchi S."/>
            <person name="Itoh T."/>
            <person name="Shigeta K."/>
            <person name="Senba T."/>
            <person name="Matsumura K."/>
            <person name="Nakajima Y."/>
            <person name="Mizuno T."/>
            <person name="Morinaga M."/>
            <person name="Sasaki M."/>
            <person name="Togashi T."/>
            <person name="Oyama M."/>
            <person name="Hata H."/>
            <person name="Watanabe M."/>
            <person name="Komatsu T."/>
            <person name="Mizushima-Sugano J."/>
            <person name="Satoh T."/>
            <person name="Shirai Y."/>
            <person name="Takahashi Y."/>
            <person name="Nakagawa K."/>
            <person name="Okumura K."/>
            <person name="Nagase T."/>
            <person name="Nomura N."/>
            <person name="Kikuchi H."/>
            <person name="Masuho Y."/>
            <person name="Yamashita R."/>
            <person name="Nakai K."/>
            <person name="Yada T."/>
            <person name="Nakamura Y."/>
            <person name="Ohara O."/>
            <person name="Isogai T."/>
            <person name="Sugano S."/>
        </authorList>
    </citation>
    <scope>NUCLEOTIDE SEQUENCE [LARGE SCALE MRNA] (ISOFORM 3)</scope>
    <source>
        <tissue>Brain</tissue>
    </source>
</reference>
<reference key="4">
    <citation type="journal article" date="2006" name="Nature">
        <title>The finished DNA sequence of human chromosome 12.</title>
        <authorList>
            <person name="Scherer S.E."/>
            <person name="Muzny D.M."/>
            <person name="Buhay C.J."/>
            <person name="Chen R."/>
            <person name="Cree A."/>
            <person name="Ding Y."/>
            <person name="Dugan-Rocha S."/>
            <person name="Gill R."/>
            <person name="Gunaratne P."/>
            <person name="Harris R.A."/>
            <person name="Hawes A.C."/>
            <person name="Hernandez J."/>
            <person name="Hodgson A.V."/>
            <person name="Hume J."/>
            <person name="Jackson A."/>
            <person name="Khan Z.M."/>
            <person name="Kovar-Smith C."/>
            <person name="Lewis L.R."/>
            <person name="Lozado R.J."/>
            <person name="Metzker M.L."/>
            <person name="Milosavljevic A."/>
            <person name="Miner G.R."/>
            <person name="Montgomery K.T."/>
            <person name="Morgan M.B."/>
            <person name="Nazareth L.V."/>
            <person name="Scott G."/>
            <person name="Sodergren E."/>
            <person name="Song X.-Z."/>
            <person name="Steffen D."/>
            <person name="Lovering R.C."/>
            <person name="Wheeler D.A."/>
            <person name="Worley K.C."/>
            <person name="Yuan Y."/>
            <person name="Zhang Z."/>
            <person name="Adams C.Q."/>
            <person name="Ansari-Lari M.A."/>
            <person name="Ayele M."/>
            <person name="Brown M.J."/>
            <person name="Chen G."/>
            <person name="Chen Z."/>
            <person name="Clerc-Blankenburg K.P."/>
            <person name="Davis C."/>
            <person name="Delgado O."/>
            <person name="Dinh H.H."/>
            <person name="Draper H."/>
            <person name="Gonzalez-Garay M.L."/>
            <person name="Havlak P."/>
            <person name="Jackson L.R."/>
            <person name="Jacob L.S."/>
            <person name="Kelly S.H."/>
            <person name="Li L."/>
            <person name="Li Z."/>
            <person name="Liu J."/>
            <person name="Liu W."/>
            <person name="Lu J."/>
            <person name="Maheshwari M."/>
            <person name="Nguyen B.-V."/>
            <person name="Okwuonu G.O."/>
            <person name="Pasternak S."/>
            <person name="Perez L.M."/>
            <person name="Plopper F.J.H."/>
            <person name="Santibanez J."/>
            <person name="Shen H."/>
            <person name="Tabor P.E."/>
            <person name="Verduzco D."/>
            <person name="Waldron L."/>
            <person name="Wang Q."/>
            <person name="Williams G.A."/>
            <person name="Zhang J."/>
            <person name="Zhou J."/>
            <person name="Allen C.C."/>
            <person name="Amin A.G."/>
            <person name="Anyalebechi V."/>
            <person name="Bailey M."/>
            <person name="Barbaria J.A."/>
            <person name="Bimage K.E."/>
            <person name="Bryant N.P."/>
            <person name="Burch P.E."/>
            <person name="Burkett C.E."/>
            <person name="Burrell K.L."/>
            <person name="Calderon E."/>
            <person name="Cardenas V."/>
            <person name="Carter K."/>
            <person name="Casias K."/>
            <person name="Cavazos I."/>
            <person name="Cavazos S.R."/>
            <person name="Ceasar H."/>
            <person name="Chacko J."/>
            <person name="Chan S.N."/>
            <person name="Chavez D."/>
            <person name="Christopoulos C."/>
            <person name="Chu J."/>
            <person name="Cockrell R."/>
            <person name="Cox C.D."/>
            <person name="Dang M."/>
            <person name="Dathorne S.R."/>
            <person name="David R."/>
            <person name="Davis C.M."/>
            <person name="Davy-Carroll L."/>
            <person name="Deshazo D.R."/>
            <person name="Donlin J.E."/>
            <person name="D'Souza L."/>
            <person name="Eaves K.A."/>
            <person name="Egan A."/>
            <person name="Emery-Cohen A.J."/>
            <person name="Escotto M."/>
            <person name="Flagg N."/>
            <person name="Forbes L.D."/>
            <person name="Gabisi A.M."/>
            <person name="Garza M."/>
            <person name="Hamilton C."/>
            <person name="Henderson N."/>
            <person name="Hernandez O."/>
            <person name="Hines S."/>
            <person name="Hogues M.E."/>
            <person name="Huang M."/>
            <person name="Idlebird D.G."/>
            <person name="Johnson R."/>
            <person name="Jolivet A."/>
            <person name="Jones S."/>
            <person name="Kagan R."/>
            <person name="King L.M."/>
            <person name="Leal B."/>
            <person name="Lebow H."/>
            <person name="Lee S."/>
            <person name="LeVan J.M."/>
            <person name="Lewis L.C."/>
            <person name="London P."/>
            <person name="Lorensuhewa L.M."/>
            <person name="Loulseged H."/>
            <person name="Lovett D.A."/>
            <person name="Lucier A."/>
            <person name="Lucier R.L."/>
            <person name="Ma J."/>
            <person name="Madu R.C."/>
            <person name="Mapua P."/>
            <person name="Martindale A.D."/>
            <person name="Martinez E."/>
            <person name="Massey E."/>
            <person name="Mawhiney S."/>
            <person name="Meador M.G."/>
            <person name="Mendez S."/>
            <person name="Mercado C."/>
            <person name="Mercado I.C."/>
            <person name="Merritt C.E."/>
            <person name="Miner Z.L."/>
            <person name="Minja E."/>
            <person name="Mitchell T."/>
            <person name="Mohabbat F."/>
            <person name="Mohabbat K."/>
            <person name="Montgomery B."/>
            <person name="Moore N."/>
            <person name="Morris S."/>
            <person name="Munidasa M."/>
            <person name="Ngo R.N."/>
            <person name="Nguyen N.B."/>
            <person name="Nickerson E."/>
            <person name="Nwaokelemeh O.O."/>
            <person name="Nwokenkwo S."/>
            <person name="Obregon M."/>
            <person name="Oguh M."/>
            <person name="Oragunye N."/>
            <person name="Oviedo R.J."/>
            <person name="Parish B.J."/>
            <person name="Parker D.N."/>
            <person name="Parrish J."/>
            <person name="Parks K.L."/>
            <person name="Paul H.A."/>
            <person name="Payton B.A."/>
            <person name="Perez A."/>
            <person name="Perrin W."/>
            <person name="Pickens A."/>
            <person name="Primus E.L."/>
            <person name="Pu L.-L."/>
            <person name="Puazo M."/>
            <person name="Quiles M.M."/>
            <person name="Quiroz J.B."/>
            <person name="Rabata D."/>
            <person name="Reeves K."/>
            <person name="Ruiz S.J."/>
            <person name="Shao H."/>
            <person name="Sisson I."/>
            <person name="Sonaike T."/>
            <person name="Sorelle R.P."/>
            <person name="Sutton A.E."/>
            <person name="Svatek A.F."/>
            <person name="Svetz L.A."/>
            <person name="Tamerisa K.S."/>
            <person name="Taylor T.R."/>
            <person name="Teague B."/>
            <person name="Thomas N."/>
            <person name="Thorn R.D."/>
            <person name="Trejos Z.Y."/>
            <person name="Trevino B.K."/>
            <person name="Ukegbu O.N."/>
            <person name="Urban J.B."/>
            <person name="Vasquez L.I."/>
            <person name="Vera V.A."/>
            <person name="Villasana D.M."/>
            <person name="Wang L."/>
            <person name="Ward-Moore S."/>
            <person name="Warren J.T."/>
            <person name="Wei X."/>
            <person name="White F."/>
            <person name="Williamson A.L."/>
            <person name="Wleczyk R."/>
            <person name="Wooden H.S."/>
            <person name="Wooden S.H."/>
            <person name="Yen J."/>
            <person name="Yoon L."/>
            <person name="Yoon V."/>
            <person name="Zorrilla S.E."/>
            <person name="Nelson D."/>
            <person name="Kucherlapati R."/>
            <person name="Weinstock G."/>
            <person name="Gibbs R.A."/>
        </authorList>
    </citation>
    <scope>NUCLEOTIDE SEQUENCE [LARGE SCALE GENOMIC DNA]</scope>
</reference>
<sequence>MDVLPTGGGRPGLRTELEFRGGGGEARLESQEEETIPAAPPAPRLRGAAERPRRSRDTWDGDEDTEPGEACGGRTSRTASLVSGLLNELYSCTEEEEAAGGGRGAEGRRRRRDSLDSSTEASGSDVVLGGRSGAGDSRVLQELQERPSQRHQMLYLRQKDANELKTILRELKYRIGIQSAKLLRHLKQKDRLLHKVQRNCDIVTACLQAVSQKRRVDTKLKFTLEPSLGQNGFQQWYDALKAVARLSTGIPKEWRRKVWLTLADHYLHSIAIDWDKTMRFTFNERSNPDDDSMGIQIVKDLHRTGCSSYCGQEAEQDRVVLKRVLLAYARWNKTVGYCQGFNILAALILEVMEGNEGDALKIMIYLIDKVLPESYFVNNLRALSVDMAVFRDLLRMKLPELSQHLDTLQRTANKESGGGYEPPLTNVFTMQWFLTLFATCLPNQTVLKIWDSVFFEGSEIILRVSLAIWAKLGEQIECCETADEFYSTMGRLTQEMLENDLLQSHELMQTVYSMAPFPFPQLAELREKYTYNITPFPATVKPTSVSGRHSKARDSDEENDPDDEDAVVNAVGCLGPFSGFLAPELQKYQKQIKEPNEEQSLRSNNIAELSPGAINSCRSEYHAAFNSMMMERMTTDINALKRQYSRIKKKQQQQVHQVYIRADKGPVTSILPSQVNSSPVINHLLLGKKMKMTNRAAKNAVIHIPGHTGGKISPVPYEDLKTKLNSPWRTHIRVHKKNMPRTKSHPGCGDTVGLIDEQNEASKTNGLGAAEAFPSGCTATAGREGSSPEGSTRRTIEGQSPEPVFGDADVDVSAVQAKLGALELNQRDAAAETELRVHPPCQRHCPEPPSAPEENKATSKAPQGSNSKTPIFSPFPSVKPLRKSATARNLGLYGPTERTPTVHFPQMSRSFSKPGGGNSGTKKR</sequence>